<accession>A6TBH6</accession>
<dbReference type="EMBL" id="CP000647">
    <property type="protein sequence ID" value="ABR77947.1"/>
    <property type="molecule type" value="Genomic_DNA"/>
</dbReference>
<dbReference type="RefSeq" id="WP_004149057.1">
    <property type="nucleotide sequence ID" value="NC_009648.1"/>
</dbReference>
<dbReference type="SMR" id="A6TBH6"/>
<dbReference type="STRING" id="272620.KPN_02529"/>
<dbReference type="PaxDb" id="272620-KPN_02529"/>
<dbReference type="EnsemblBacteria" id="ABR77947">
    <property type="protein sequence ID" value="ABR77947"/>
    <property type="gene ID" value="KPN_02529"/>
</dbReference>
<dbReference type="KEGG" id="kpn:KPN_02529"/>
<dbReference type="HOGENOM" id="CLU_000960_28_0_6"/>
<dbReference type="Proteomes" id="UP000000265">
    <property type="component" value="Chromosome"/>
</dbReference>
<dbReference type="GO" id="GO:0005886">
    <property type="term" value="C:plasma membrane"/>
    <property type="evidence" value="ECO:0007669"/>
    <property type="project" value="UniProtKB-SubCell"/>
</dbReference>
<dbReference type="GO" id="GO:0022857">
    <property type="term" value="F:transmembrane transporter activity"/>
    <property type="evidence" value="ECO:0007669"/>
    <property type="project" value="UniProtKB-UniRule"/>
</dbReference>
<dbReference type="CDD" id="cd17503">
    <property type="entry name" value="MFS_LmrB_MDR_like"/>
    <property type="match status" value="1"/>
</dbReference>
<dbReference type="FunFam" id="1.20.1250.20:FF:000021">
    <property type="entry name" value="Putative multidrug resistance protein MdtD"/>
    <property type="match status" value="1"/>
</dbReference>
<dbReference type="FunFam" id="1.20.1720.10:FF:000001">
    <property type="entry name" value="Putative multidrug resistance protein MdtD"/>
    <property type="match status" value="1"/>
</dbReference>
<dbReference type="Gene3D" id="1.20.1250.20">
    <property type="entry name" value="MFS general substrate transporter like domains"/>
    <property type="match status" value="1"/>
</dbReference>
<dbReference type="Gene3D" id="1.20.1720.10">
    <property type="entry name" value="Multidrug resistance protein D"/>
    <property type="match status" value="1"/>
</dbReference>
<dbReference type="HAMAP" id="MF_01577">
    <property type="entry name" value="MFS_MdtD"/>
    <property type="match status" value="1"/>
</dbReference>
<dbReference type="InterPro" id="IPR011701">
    <property type="entry name" value="MFS"/>
</dbReference>
<dbReference type="InterPro" id="IPR020846">
    <property type="entry name" value="MFS_dom"/>
</dbReference>
<dbReference type="InterPro" id="IPR036259">
    <property type="entry name" value="MFS_trans_sf"/>
</dbReference>
<dbReference type="InterPro" id="IPR023721">
    <property type="entry name" value="Multi-R_MdtD"/>
</dbReference>
<dbReference type="NCBIfam" id="NF007799">
    <property type="entry name" value="PRK10504.1"/>
    <property type="match status" value="1"/>
</dbReference>
<dbReference type="PANTHER" id="PTHR42718:SF46">
    <property type="entry name" value="BLR6921 PROTEIN"/>
    <property type="match status" value="1"/>
</dbReference>
<dbReference type="PANTHER" id="PTHR42718">
    <property type="entry name" value="MAJOR FACILITATOR SUPERFAMILY MULTIDRUG TRANSPORTER MFSC"/>
    <property type="match status" value="1"/>
</dbReference>
<dbReference type="Pfam" id="PF07690">
    <property type="entry name" value="MFS_1"/>
    <property type="match status" value="1"/>
</dbReference>
<dbReference type="PRINTS" id="PR01036">
    <property type="entry name" value="TCRTETB"/>
</dbReference>
<dbReference type="SUPFAM" id="SSF103473">
    <property type="entry name" value="MFS general substrate transporter"/>
    <property type="match status" value="1"/>
</dbReference>
<dbReference type="PROSITE" id="PS50850">
    <property type="entry name" value="MFS"/>
    <property type="match status" value="1"/>
</dbReference>
<gene>
    <name evidence="1" type="primary">mdtD</name>
    <name type="ordered locus">KPN78578_24860</name>
    <name type="ORF">KPN_02529</name>
</gene>
<organism>
    <name type="scientific">Klebsiella pneumoniae subsp. pneumoniae (strain ATCC 700721 / MGH 78578)</name>
    <dbReference type="NCBI Taxonomy" id="272620"/>
    <lineage>
        <taxon>Bacteria</taxon>
        <taxon>Pseudomonadati</taxon>
        <taxon>Pseudomonadota</taxon>
        <taxon>Gammaproteobacteria</taxon>
        <taxon>Enterobacterales</taxon>
        <taxon>Enterobacteriaceae</taxon>
        <taxon>Klebsiella/Raoultella group</taxon>
        <taxon>Klebsiella</taxon>
        <taxon>Klebsiella pneumoniae complex</taxon>
    </lineage>
</organism>
<feature type="chain" id="PRO_1000069265" description="Putative multidrug resistance protein MdtD">
    <location>
        <begin position="1"/>
        <end position="471"/>
    </location>
</feature>
<feature type="transmembrane region" description="Helical" evidence="1">
    <location>
        <begin position="12"/>
        <end position="32"/>
    </location>
</feature>
<feature type="transmembrane region" description="Helical" evidence="1">
    <location>
        <begin position="49"/>
        <end position="69"/>
    </location>
</feature>
<feature type="transmembrane region" description="Helical" evidence="1">
    <location>
        <begin position="77"/>
        <end position="97"/>
    </location>
</feature>
<feature type="transmembrane region" description="Helical" evidence="1">
    <location>
        <begin position="102"/>
        <end position="124"/>
    </location>
</feature>
<feature type="transmembrane region" description="Helical" evidence="1">
    <location>
        <begin position="138"/>
        <end position="158"/>
    </location>
</feature>
<feature type="transmembrane region" description="Helical" evidence="1">
    <location>
        <begin position="165"/>
        <end position="185"/>
    </location>
</feature>
<feature type="transmembrane region" description="Helical" evidence="1">
    <location>
        <begin position="195"/>
        <end position="215"/>
    </location>
</feature>
<feature type="transmembrane region" description="Helical" evidence="1">
    <location>
        <begin position="220"/>
        <end position="240"/>
    </location>
</feature>
<feature type="transmembrane region" description="Helical" evidence="1">
    <location>
        <begin position="263"/>
        <end position="283"/>
    </location>
</feature>
<feature type="transmembrane region" description="Helical" evidence="1">
    <location>
        <begin position="286"/>
        <end position="306"/>
    </location>
</feature>
<feature type="transmembrane region" description="Helical" evidence="1">
    <location>
        <begin position="329"/>
        <end position="351"/>
    </location>
</feature>
<feature type="transmembrane region" description="Helical" evidence="1">
    <location>
        <begin position="393"/>
        <end position="413"/>
    </location>
</feature>
<feature type="transmembrane region" description="Helical" evidence="1">
    <location>
        <begin position="431"/>
        <end position="451"/>
    </location>
</feature>
<comment type="subcellular location">
    <subcellularLocation>
        <location evidence="1">Cell inner membrane</location>
        <topology evidence="1">Multi-pass membrane protein</topology>
    </subcellularLocation>
</comment>
<comment type="similarity">
    <text evidence="1">Belongs to the major facilitator superfamily. TCR/Tet family.</text>
</comment>
<name>MDTD_KLEP7</name>
<keyword id="KW-0997">Cell inner membrane</keyword>
<keyword id="KW-1003">Cell membrane</keyword>
<keyword id="KW-0472">Membrane</keyword>
<keyword id="KW-0812">Transmembrane</keyword>
<keyword id="KW-1133">Transmembrane helix</keyword>
<keyword id="KW-0813">Transport</keyword>
<sequence length="471" mass="50694">MTDLPASVRWQLWIVAFGFFMQSLDTTIVNTALPSMAKSLGESPLHMHMIIVSYVLTVAVMLPASGWLADRVGVRNIFFTAIVLFTAGSLFCAQASTLDQLVMARVLQGVGGAMMVPVGRLTVMKIVPRDQYMAAMTFVTLPGQVGPLLGPALGGVLVEYASWHWIFLINIPVGIVGAIATLCLMPNYTMQTRRFDLSGFLLLAAGMATLTLALDGQKGLGISPAWLAGLVAVGLCALLLYLWHARGNARALFSLNLFRNRTFSLGLGGSFAGRIGSGMLPFMTPVFLQIGLGFSPFHAGLMMIPMVLGSMGMKRIVVQVVNRFGYRRVLVASTLGLAAVSLLFMFSALAGWYYVLPLVLFLQGMINASRFSSMNTLTLKDLPDDLASSGNSLLSMVMQLSMSIGVTIAGLLLGLYGQQHMSLDAASTHQVFLYTYLSMAAIIALPALIFSRVPDDVGSNTVLRRRNRSGS</sequence>
<proteinExistence type="inferred from homology"/>
<evidence type="ECO:0000255" key="1">
    <source>
        <dbReference type="HAMAP-Rule" id="MF_01577"/>
    </source>
</evidence>
<protein>
    <recommendedName>
        <fullName evidence="1">Putative multidrug resistance protein MdtD</fullName>
    </recommendedName>
</protein>
<reference key="1">
    <citation type="submission" date="2006-09" db="EMBL/GenBank/DDBJ databases">
        <authorList>
            <consortium name="The Klebsiella pneumonia Genome Sequencing Project"/>
            <person name="McClelland M."/>
            <person name="Sanderson E.K."/>
            <person name="Spieth J."/>
            <person name="Clifton W.S."/>
            <person name="Latreille P."/>
            <person name="Sabo A."/>
            <person name="Pepin K."/>
            <person name="Bhonagiri V."/>
            <person name="Porwollik S."/>
            <person name="Ali J."/>
            <person name="Wilson R.K."/>
        </authorList>
    </citation>
    <scope>NUCLEOTIDE SEQUENCE [LARGE SCALE GENOMIC DNA]</scope>
    <source>
        <strain>ATCC 700721 / MGH 78578</strain>
    </source>
</reference>